<proteinExistence type="inferred from homology"/>
<protein>
    <recommendedName>
        <fullName evidence="1">Small ribosomal subunit protein uS3</fullName>
    </recommendedName>
    <alternativeName>
        <fullName evidence="2">30S ribosomal protein S3</fullName>
    </alternativeName>
</protein>
<feature type="chain" id="PRO_0000130104" description="Small ribosomal subunit protein uS3">
    <location>
        <begin position="1"/>
        <end position="222"/>
    </location>
</feature>
<feature type="domain" description="KH type-2" evidence="1">
    <location>
        <begin position="39"/>
        <end position="108"/>
    </location>
</feature>
<dbReference type="EMBL" id="BA000016">
    <property type="protein sequence ID" value="BAB82105.1"/>
    <property type="molecule type" value="Genomic_DNA"/>
</dbReference>
<dbReference type="RefSeq" id="WP_003454406.1">
    <property type="nucleotide sequence ID" value="NC_003366.1"/>
</dbReference>
<dbReference type="SMR" id="Q8XHS9"/>
<dbReference type="STRING" id="195102.gene:10491716"/>
<dbReference type="GeneID" id="93001015"/>
<dbReference type="KEGG" id="cpe:CPE2399"/>
<dbReference type="HOGENOM" id="CLU_058591_0_2_9"/>
<dbReference type="Proteomes" id="UP000000818">
    <property type="component" value="Chromosome"/>
</dbReference>
<dbReference type="GO" id="GO:0022627">
    <property type="term" value="C:cytosolic small ribosomal subunit"/>
    <property type="evidence" value="ECO:0007669"/>
    <property type="project" value="TreeGrafter"/>
</dbReference>
<dbReference type="GO" id="GO:0003729">
    <property type="term" value="F:mRNA binding"/>
    <property type="evidence" value="ECO:0007669"/>
    <property type="project" value="UniProtKB-UniRule"/>
</dbReference>
<dbReference type="GO" id="GO:0019843">
    <property type="term" value="F:rRNA binding"/>
    <property type="evidence" value="ECO:0007669"/>
    <property type="project" value="UniProtKB-UniRule"/>
</dbReference>
<dbReference type="GO" id="GO:0003735">
    <property type="term" value="F:structural constituent of ribosome"/>
    <property type="evidence" value="ECO:0007669"/>
    <property type="project" value="InterPro"/>
</dbReference>
<dbReference type="GO" id="GO:0006412">
    <property type="term" value="P:translation"/>
    <property type="evidence" value="ECO:0007669"/>
    <property type="project" value="UniProtKB-UniRule"/>
</dbReference>
<dbReference type="CDD" id="cd02412">
    <property type="entry name" value="KH-II_30S_S3"/>
    <property type="match status" value="1"/>
</dbReference>
<dbReference type="FunFam" id="3.30.300.20:FF:000001">
    <property type="entry name" value="30S ribosomal protein S3"/>
    <property type="match status" value="1"/>
</dbReference>
<dbReference type="Gene3D" id="3.30.300.20">
    <property type="match status" value="1"/>
</dbReference>
<dbReference type="Gene3D" id="3.30.1140.32">
    <property type="entry name" value="Ribosomal protein S3, C-terminal domain"/>
    <property type="match status" value="1"/>
</dbReference>
<dbReference type="HAMAP" id="MF_01309_B">
    <property type="entry name" value="Ribosomal_uS3_B"/>
    <property type="match status" value="1"/>
</dbReference>
<dbReference type="InterPro" id="IPR004087">
    <property type="entry name" value="KH_dom"/>
</dbReference>
<dbReference type="InterPro" id="IPR015946">
    <property type="entry name" value="KH_dom-like_a/b"/>
</dbReference>
<dbReference type="InterPro" id="IPR004044">
    <property type="entry name" value="KH_dom_type_2"/>
</dbReference>
<dbReference type="InterPro" id="IPR009019">
    <property type="entry name" value="KH_sf_prok-type"/>
</dbReference>
<dbReference type="InterPro" id="IPR036419">
    <property type="entry name" value="Ribosomal_S3_C_sf"/>
</dbReference>
<dbReference type="InterPro" id="IPR005704">
    <property type="entry name" value="Ribosomal_uS3_bac-typ"/>
</dbReference>
<dbReference type="InterPro" id="IPR001351">
    <property type="entry name" value="Ribosomal_uS3_C"/>
</dbReference>
<dbReference type="InterPro" id="IPR018280">
    <property type="entry name" value="Ribosomal_uS3_CS"/>
</dbReference>
<dbReference type="NCBIfam" id="TIGR01009">
    <property type="entry name" value="rpsC_bact"/>
    <property type="match status" value="1"/>
</dbReference>
<dbReference type="PANTHER" id="PTHR11760">
    <property type="entry name" value="30S/40S RIBOSOMAL PROTEIN S3"/>
    <property type="match status" value="1"/>
</dbReference>
<dbReference type="PANTHER" id="PTHR11760:SF19">
    <property type="entry name" value="SMALL RIBOSOMAL SUBUNIT PROTEIN US3C"/>
    <property type="match status" value="1"/>
</dbReference>
<dbReference type="Pfam" id="PF07650">
    <property type="entry name" value="KH_2"/>
    <property type="match status" value="1"/>
</dbReference>
<dbReference type="Pfam" id="PF00189">
    <property type="entry name" value="Ribosomal_S3_C"/>
    <property type="match status" value="1"/>
</dbReference>
<dbReference type="SMART" id="SM00322">
    <property type="entry name" value="KH"/>
    <property type="match status" value="1"/>
</dbReference>
<dbReference type="SUPFAM" id="SSF54814">
    <property type="entry name" value="Prokaryotic type KH domain (KH-domain type II)"/>
    <property type="match status" value="1"/>
</dbReference>
<dbReference type="SUPFAM" id="SSF54821">
    <property type="entry name" value="Ribosomal protein S3 C-terminal domain"/>
    <property type="match status" value="1"/>
</dbReference>
<dbReference type="PROSITE" id="PS50823">
    <property type="entry name" value="KH_TYPE_2"/>
    <property type="match status" value="1"/>
</dbReference>
<dbReference type="PROSITE" id="PS00548">
    <property type="entry name" value="RIBOSOMAL_S3"/>
    <property type="match status" value="1"/>
</dbReference>
<evidence type="ECO:0000255" key="1">
    <source>
        <dbReference type="HAMAP-Rule" id="MF_01309"/>
    </source>
</evidence>
<evidence type="ECO:0000305" key="2"/>
<organism>
    <name type="scientific">Clostridium perfringens (strain 13 / Type A)</name>
    <dbReference type="NCBI Taxonomy" id="195102"/>
    <lineage>
        <taxon>Bacteria</taxon>
        <taxon>Bacillati</taxon>
        <taxon>Bacillota</taxon>
        <taxon>Clostridia</taxon>
        <taxon>Eubacteriales</taxon>
        <taxon>Clostridiaceae</taxon>
        <taxon>Clostridium</taxon>
    </lineage>
</organism>
<name>RS3_CLOPE</name>
<comment type="function">
    <text evidence="1">Binds the lower part of the 30S subunit head. Binds mRNA in the 70S ribosome, positioning it for translation.</text>
</comment>
<comment type="subunit">
    <text evidence="1">Part of the 30S ribosomal subunit. Forms a tight complex with proteins S10 and S14.</text>
</comment>
<comment type="similarity">
    <text evidence="1">Belongs to the universal ribosomal protein uS3 family.</text>
</comment>
<keyword id="KW-1185">Reference proteome</keyword>
<keyword id="KW-0687">Ribonucleoprotein</keyword>
<keyword id="KW-0689">Ribosomal protein</keyword>
<keyword id="KW-0694">RNA-binding</keyword>
<keyword id="KW-0699">rRNA-binding</keyword>
<accession>Q8XHS9</accession>
<reference key="1">
    <citation type="journal article" date="2002" name="Proc. Natl. Acad. Sci. U.S.A.">
        <title>Complete genome sequence of Clostridium perfringens, an anaerobic flesh-eater.</title>
        <authorList>
            <person name="Shimizu T."/>
            <person name="Ohtani K."/>
            <person name="Hirakawa H."/>
            <person name="Ohshima K."/>
            <person name="Yamashita A."/>
            <person name="Shiba T."/>
            <person name="Ogasawara N."/>
            <person name="Hattori M."/>
            <person name="Kuhara S."/>
            <person name="Hayashi H."/>
        </authorList>
    </citation>
    <scope>NUCLEOTIDE SEQUENCE [LARGE SCALE GENOMIC DNA]</scope>
    <source>
        <strain>13 / Type A</strain>
    </source>
</reference>
<gene>
    <name evidence="1" type="primary">rpsC</name>
    <name type="ordered locus">CPE2399</name>
</gene>
<sequence length="222" mass="24616">MGQKVHPHGLRVGVIKDWDAKWYADKKNFADNLIEDQQIRKFIKKELFSAGIAKIEIERSAKRVKLNIHTAKPGVIIGKGGSGIERLKASLKNIIAEKNVLINIVEVKNAETNAQLMAENIAAQLEKRISFRRAMKQTIQRAMKAGTLGVKTACSGRLGGAEIARTEQYNEGTIPLQTIRADIDYGFAEADTTYGKIGVKVWVYNGEVLPTKKVEKKEEANA</sequence>